<comment type="catalytic activity">
    <reaction evidence="1">
        <text>(S)-4-amino-5-oxopentanoate = 5-aminolevulinate</text>
        <dbReference type="Rhea" id="RHEA:14265"/>
        <dbReference type="ChEBI" id="CHEBI:57501"/>
        <dbReference type="ChEBI" id="CHEBI:356416"/>
        <dbReference type="EC" id="5.4.3.8"/>
    </reaction>
</comment>
<comment type="cofactor">
    <cofactor evidence="1">
        <name>pyridoxal 5'-phosphate</name>
        <dbReference type="ChEBI" id="CHEBI:597326"/>
    </cofactor>
</comment>
<comment type="pathway">
    <text evidence="1">Porphyrin-containing compound metabolism; protoporphyrin-IX biosynthesis; 5-aminolevulinate from L-glutamyl-tRNA(Glu): step 2/2.</text>
</comment>
<comment type="subunit">
    <text evidence="1">Homodimer.</text>
</comment>
<comment type="subcellular location">
    <subcellularLocation>
        <location evidence="1">Cytoplasm</location>
    </subcellularLocation>
</comment>
<comment type="similarity">
    <text evidence="1">Belongs to the class-III pyridoxal-phosphate-dependent aminotransferase family. HemL subfamily.</text>
</comment>
<feature type="chain" id="PRO_1000059998" description="Glutamate-1-semialdehyde 2,1-aminomutase">
    <location>
        <begin position="1"/>
        <end position="427"/>
    </location>
</feature>
<feature type="modified residue" description="N6-(pyridoxal phosphate)lysine" evidence="1">
    <location>
        <position position="265"/>
    </location>
</feature>
<keyword id="KW-0963">Cytoplasm</keyword>
<keyword id="KW-0413">Isomerase</keyword>
<keyword id="KW-0627">Porphyrin biosynthesis</keyword>
<keyword id="KW-0663">Pyridoxal phosphate</keyword>
<organism>
    <name type="scientific">Pseudomonas putida (strain ATCC 700007 / DSM 6899 / JCM 31910 / BCRC 17059 / LMG 24140 / F1)</name>
    <dbReference type="NCBI Taxonomy" id="351746"/>
    <lineage>
        <taxon>Bacteria</taxon>
        <taxon>Pseudomonadati</taxon>
        <taxon>Pseudomonadota</taxon>
        <taxon>Gammaproteobacteria</taxon>
        <taxon>Pseudomonadales</taxon>
        <taxon>Pseudomonadaceae</taxon>
        <taxon>Pseudomonas</taxon>
    </lineage>
</organism>
<protein>
    <recommendedName>
        <fullName evidence="1">Glutamate-1-semialdehyde 2,1-aminomutase</fullName>
        <shortName evidence="1">GSA</shortName>
        <ecNumber evidence="1">5.4.3.8</ecNumber>
    </recommendedName>
    <alternativeName>
        <fullName evidence="1">Glutamate-1-semialdehyde aminotransferase</fullName>
        <shortName evidence="1">GSA-AT</shortName>
    </alternativeName>
</protein>
<sequence>MSRSEALFAQAQKHIPGGVNSPVRAFKSVGGTPLFFKHAEGAYVVDEDDKRYVDYVGSWGPMILGHGHPDVLDSVRKQLEHGLSYGAPTAMETEMADLVCSIVPSMEMVRMVSSGTEATMSAIRLARGYTGRDAIIKFEGCYHGHSDSLLVKAGSGLLTQGVPSSAGVPADFAKHTLTLPFNDIAAVEKTLAEVGQTVACIIVEPVAGNMNCVPPAPGFLEGLREQCDKHGVVLIFDEVMTGFRVSLGGAQGHYGITPDLSTFGKIVGGGMPVGCFGGKREIMGCIAPLGPVYQAGTLSGNPLAMAAGLTTLKLISRPGFHAELTDYTSRMLDGLQQRADAAGVPFVTTQAGAMFGLYFSGADDIVTFEDVMASDAERFKRFFHLMLDGGVYLAPSAFEAGFTSIAHGDKELQITLDAAEKAFAALK</sequence>
<accession>A5W9H0</accession>
<gene>
    <name evidence="1" type="primary">hemL</name>
    <name type="ordered locus">Pput_4660</name>
</gene>
<name>GSA_PSEP1</name>
<reference key="1">
    <citation type="submission" date="2007-05" db="EMBL/GenBank/DDBJ databases">
        <title>Complete sequence of Pseudomonas putida F1.</title>
        <authorList>
            <consortium name="US DOE Joint Genome Institute"/>
            <person name="Copeland A."/>
            <person name="Lucas S."/>
            <person name="Lapidus A."/>
            <person name="Barry K."/>
            <person name="Detter J.C."/>
            <person name="Glavina del Rio T."/>
            <person name="Hammon N."/>
            <person name="Israni S."/>
            <person name="Dalin E."/>
            <person name="Tice H."/>
            <person name="Pitluck S."/>
            <person name="Chain P."/>
            <person name="Malfatti S."/>
            <person name="Shin M."/>
            <person name="Vergez L."/>
            <person name="Schmutz J."/>
            <person name="Larimer F."/>
            <person name="Land M."/>
            <person name="Hauser L."/>
            <person name="Kyrpides N."/>
            <person name="Lykidis A."/>
            <person name="Parales R."/>
            <person name="Richardson P."/>
        </authorList>
    </citation>
    <scope>NUCLEOTIDE SEQUENCE [LARGE SCALE GENOMIC DNA]</scope>
    <source>
        <strain>ATCC 700007 / DSM 6899 / JCM 31910 / BCRC 17059 / LMG 24140 / F1</strain>
    </source>
</reference>
<proteinExistence type="inferred from homology"/>
<evidence type="ECO:0000255" key="1">
    <source>
        <dbReference type="HAMAP-Rule" id="MF_00375"/>
    </source>
</evidence>
<dbReference type="EC" id="5.4.3.8" evidence="1"/>
<dbReference type="EMBL" id="CP000712">
    <property type="protein sequence ID" value="ABQ80780.1"/>
    <property type="molecule type" value="Genomic_DNA"/>
</dbReference>
<dbReference type="SMR" id="A5W9H0"/>
<dbReference type="KEGG" id="ppf:Pput_4660"/>
<dbReference type="eggNOG" id="COG0001">
    <property type="taxonomic scope" value="Bacteria"/>
</dbReference>
<dbReference type="HOGENOM" id="CLU_016922_1_5_6"/>
<dbReference type="UniPathway" id="UPA00251">
    <property type="reaction ID" value="UER00317"/>
</dbReference>
<dbReference type="GO" id="GO:0005737">
    <property type="term" value="C:cytoplasm"/>
    <property type="evidence" value="ECO:0007669"/>
    <property type="project" value="UniProtKB-SubCell"/>
</dbReference>
<dbReference type="GO" id="GO:0042286">
    <property type="term" value="F:glutamate-1-semialdehyde 2,1-aminomutase activity"/>
    <property type="evidence" value="ECO:0007669"/>
    <property type="project" value="UniProtKB-UniRule"/>
</dbReference>
<dbReference type="GO" id="GO:0030170">
    <property type="term" value="F:pyridoxal phosphate binding"/>
    <property type="evidence" value="ECO:0007669"/>
    <property type="project" value="InterPro"/>
</dbReference>
<dbReference type="GO" id="GO:0008483">
    <property type="term" value="F:transaminase activity"/>
    <property type="evidence" value="ECO:0007669"/>
    <property type="project" value="InterPro"/>
</dbReference>
<dbReference type="GO" id="GO:0006782">
    <property type="term" value="P:protoporphyrinogen IX biosynthetic process"/>
    <property type="evidence" value="ECO:0007669"/>
    <property type="project" value="UniProtKB-UniRule"/>
</dbReference>
<dbReference type="CDD" id="cd00610">
    <property type="entry name" value="OAT_like"/>
    <property type="match status" value="1"/>
</dbReference>
<dbReference type="FunFam" id="3.40.640.10:FF:000021">
    <property type="entry name" value="Glutamate-1-semialdehyde 2,1-aminomutase"/>
    <property type="match status" value="1"/>
</dbReference>
<dbReference type="Gene3D" id="3.90.1150.10">
    <property type="entry name" value="Aspartate Aminotransferase, domain 1"/>
    <property type="match status" value="1"/>
</dbReference>
<dbReference type="Gene3D" id="3.40.640.10">
    <property type="entry name" value="Type I PLP-dependent aspartate aminotransferase-like (Major domain)"/>
    <property type="match status" value="1"/>
</dbReference>
<dbReference type="HAMAP" id="MF_00375">
    <property type="entry name" value="HemL_aminotrans_3"/>
    <property type="match status" value="1"/>
</dbReference>
<dbReference type="InterPro" id="IPR004639">
    <property type="entry name" value="4pyrrol_synth_GluAld_NH2Trfase"/>
</dbReference>
<dbReference type="InterPro" id="IPR005814">
    <property type="entry name" value="Aminotrans_3"/>
</dbReference>
<dbReference type="InterPro" id="IPR049704">
    <property type="entry name" value="Aminotrans_3_PPA_site"/>
</dbReference>
<dbReference type="InterPro" id="IPR015424">
    <property type="entry name" value="PyrdxlP-dep_Trfase"/>
</dbReference>
<dbReference type="InterPro" id="IPR015421">
    <property type="entry name" value="PyrdxlP-dep_Trfase_major"/>
</dbReference>
<dbReference type="InterPro" id="IPR015422">
    <property type="entry name" value="PyrdxlP-dep_Trfase_small"/>
</dbReference>
<dbReference type="NCBIfam" id="TIGR00713">
    <property type="entry name" value="hemL"/>
    <property type="match status" value="1"/>
</dbReference>
<dbReference type="NCBIfam" id="NF000818">
    <property type="entry name" value="PRK00062.1"/>
    <property type="match status" value="1"/>
</dbReference>
<dbReference type="PANTHER" id="PTHR43713">
    <property type="entry name" value="GLUTAMATE-1-SEMIALDEHYDE 2,1-AMINOMUTASE"/>
    <property type="match status" value="1"/>
</dbReference>
<dbReference type="PANTHER" id="PTHR43713:SF3">
    <property type="entry name" value="GLUTAMATE-1-SEMIALDEHYDE 2,1-AMINOMUTASE 1, CHLOROPLASTIC-RELATED"/>
    <property type="match status" value="1"/>
</dbReference>
<dbReference type="Pfam" id="PF00202">
    <property type="entry name" value="Aminotran_3"/>
    <property type="match status" value="1"/>
</dbReference>
<dbReference type="SUPFAM" id="SSF53383">
    <property type="entry name" value="PLP-dependent transferases"/>
    <property type="match status" value="1"/>
</dbReference>
<dbReference type="PROSITE" id="PS00600">
    <property type="entry name" value="AA_TRANSFER_CLASS_3"/>
    <property type="match status" value="1"/>
</dbReference>